<protein>
    <recommendedName>
        <fullName evidence="1">Catalase-peroxidase</fullName>
        <shortName evidence="1">CP</shortName>
        <ecNumber evidence="1">1.11.1.21</ecNumber>
    </recommendedName>
    <alternativeName>
        <fullName evidence="1">Peroxidase/catalase</fullName>
    </alternativeName>
</protein>
<proteinExistence type="evidence at protein level"/>
<name>KATG_MYCBO</name>
<dbReference type="EC" id="1.11.1.21" evidence="1"/>
<dbReference type="EMBL" id="X83277">
    <property type="protein sequence ID" value="CAA58266.1"/>
    <property type="molecule type" value="Genomic_DNA"/>
</dbReference>
<dbReference type="EMBL" id="LT708304">
    <property type="protein sequence ID" value="SIU00546.1"/>
    <property type="molecule type" value="Genomic_DNA"/>
</dbReference>
<dbReference type="RefSeq" id="NP_855594.1">
    <property type="nucleotide sequence ID" value="NC_002945.3"/>
</dbReference>
<dbReference type="RefSeq" id="WP_003901285.1">
    <property type="nucleotide sequence ID" value="NC_002945.4"/>
</dbReference>
<dbReference type="SMR" id="P46817"/>
<dbReference type="PeroxiBase" id="2434">
    <property type="entry name" value="MboCP01_BCG"/>
</dbReference>
<dbReference type="PeroxiBase" id="4578">
    <property type="entry name" value="MboCP01_AF2122"/>
</dbReference>
<dbReference type="GeneID" id="45425879"/>
<dbReference type="KEGG" id="mbo:BQ2027_MB1943C"/>
<dbReference type="PATRIC" id="fig|233413.5.peg.2132"/>
<dbReference type="Proteomes" id="UP000001419">
    <property type="component" value="Chromosome"/>
</dbReference>
<dbReference type="GO" id="GO:0005829">
    <property type="term" value="C:cytosol"/>
    <property type="evidence" value="ECO:0007669"/>
    <property type="project" value="TreeGrafter"/>
</dbReference>
<dbReference type="GO" id="GO:0004096">
    <property type="term" value="F:catalase activity"/>
    <property type="evidence" value="ECO:0007669"/>
    <property type="project" value="UniProtKB-UniRule"/>
</dbReference>
<dbReference type="GO" id="GO:0020037">
    <property type="term" value="F:heme binding"/>
    <property type="evidence" value="ECO:0007669"/>
    <property type="project" value="InterPro"/>
</dbReference>
<dbReference type="GO" id="GO:0046872">
    <property type="term" value="F:metal ion binding"/>
    <property type="evidence" value="ECO:0007669"/>
    <property type="project" value="UniProtKB-KW"/>
</dbReference>
<dbReference type="GO" id="GO:0070301">
    <property type="term" value="P:cellular response to hydrogen peroxide"/>
    <property type="evidence" value="ECO:0007669"/>
    <property type="project" value="TreeGrafter"/>
</dbReference>
<dbReference type="GO" id="GO:0042744">
    <property type="term" value="P:hydrogen peroxide catabolic process"/>
    <property type="evidence" value="ECO:0007669"/>
    <property type="project" value="UniProtKB-KW"/>
</dbReference>
<dbReference type="CDD" id="cd00649">
    <property type="entry name" value="catalase_peroxidase_1"/>
    <property type="match status" value="1"/>
</dbReference>
<dbReference type="CDD" id="cd08200">
    <property type="entry name" value="catalase_peroxidase_2"/>
    <property type="match status" value="1"/>
</dbReference>
<dbReference type="FunFam" id="1.10.420.10:FF:000002">
    <property type="entry name" value="Catalase-peroxidase"/>
    <property type="match status" value="1"/>
</dbReference>
<dbReference type="FunFam" id="1.10.420.10:FF:000004">
    <property type="entry name" value="Catalase-peroxidase"/>
    <property type="match status" value="1"/>
</dbReference>
<dbReference type="FunFam" id="1.10.520.10:FF:000002">
    <property type="entry name" value="Catalase-peroxidase"/>
    <property type="match status" value="1"/>
</dbReference>
<dbReference type="Gene3D" id="1.10.520.10">
    <property type="match status" value="2"/>
</dbReference>
<dbReference type="Gene3D" id="1.10.420.10">
    <property type="entry name" value="Peroxidase, domain 2"/>
    <property type="match status" value="2"/>
</dbReference>
<dbReference type="HAMAP" id="MF_01961">
    <property type="entry name" value="Catal_peroxid"/>
    <property type="match status" value="1"/>
</dbReference>
<dbReference type="InterPro" id="IPR000763">
    <property type="entry name" value="Catalase_peroxidase"/>
</dbReference>
<dbReference type="InterPro" id="IPR002016">
    <property type="entry name" value="Haem_peroxidase"/>
</dbReference>
<dbReference type="InterPro" id="IPR010255">
    <property type="entry name" value="Haem_peroxidase_sf"/>
</dbReference>
<dbReference type="InterPro" id="IPR019794">
    <property type="entry name" value="Peroxidases_AS"/>
</dbReference>
<dbReference type="InterPro" id="IPR019793">
    <property type="entry name" value="Peroxidases_heam-ligand_BS"/>
</dbReference>
<dbReference type="NCBIfam" id="TIGR00198">
    <property type="entry name" value="cat_per_HPI"/>
    <property type="match status" value="1"/>
</dbReference>
<dbReference type="NCBIfam" id="NF011635">
    <property type="entry name" value="PRK15061.1"/>
    <property type="match status" value="1"/>
</dbReference>
<dbReference type="PANTHER" id="PTHR30555:SF0">
    <property type="entry name" value="CATALASE-PEROXIDASE"/>
    <property type="match status" value="1"/>
</dbReference>
<dbReference type="PANTHER" id="PTHR30555">
    <property type="entry name" value="HYDROPEROXIDASE I, BIFUNCTIONAL CATALASE-PEROXIDASE"/>
    <property type="match status" value="1"/>
</dbReference>
<dbReference type="Pfam" id="PF00141">
    <property type="entry name" value="peroxidase"/>
    <property type="match status" value="2"/>
</dbReference>
<dbReference type="PRINTS" id="PR00460">
    <property type="entry name" value="BPEROXIDASE"/>
</dbReference>
<dbReference type="PRINTS" id="PR00458">
    <property type="entry name" value="PEROXIDASE"/>
</dbReference>
<dbReference type="SUPFAM" id="SSF48113">
    <property type="entry name" value="Heme-dependent peroxidases"/>
    <property type="match status" value="2"/>
</dbReference>
<dbReference type="PROSITE" id="PS00435">
    <property type="entry name" value="PEROXIDASE_1"/>
    <property type="match status" value="1"/>
</dbReference>
<dbReference type="PROSITE" id="PS00436">
    <property type="entry name" value="PEROXIDASE_2"/>
    <property type="match status" value="1"/>
</dbReference>
<dbReference type="PROSITE" id="PS50873">
    <property type="entry name" value="PEROXIDASE_4"/>
    <property type="match status" value="1"/>
</dbReference>
<organism>
    <name type="scientific">Mycobacterium bovis (strain ATCC BAA-935 / AF2122/97)</name>
    <dbReference type="NCBI Taxonomy" id="233413"/>
    <lineage>
        <taxon>Bacteria</taxon>
        <taxon>Bacillati</taxon>
        <taxon>Actinomycetota</taxon>
        <taxon>Actinomycetes</taxon>
        <taxon>Mycobacteriales</taxon>
        <taxon>Mycobacteriaceae</taxon>
        <taxon>Mycobacterium</taxon>
        <taxon>Mycobacterium tuberculosis complex</taxon>
    </lineage>
</organism>
<reference key="1">
    <citation type="journal article" date="1995" name="Mol. Microbiol.">
        <title>Missense mutations in the catalase-peroxidase gene, katG, are associated with isoniazid resistance in Mycobacterium tuberculosis.</title>
        <authorList>
            <person name="Heym B."/>
            <person name="Alzari P.M."/>
            <person name="Honore N."/>
            <person name="Cole S.T."/>
        </authorList>
    </citation>
    <scope>NUCLEOTIDE SEQUENCE [GENOMIC DNA]</scope>
    <source>
        <strain>BCG</strain>
    </source>
</reference>
<reference key="2">
    <citation type="journal article" date="2003" name="Proc. Natl. Acad. Sci. U.S.A.">
        <title>The complete genome sequence of Mycobacterium bovis.</title>
        <authorList>
            <person name="Garnier T."/>
            <person name="Eiglmeier K."/>
            <person name="Camus J.-C."/>
            <person name="Medina N."/>
            <person name="Mansoor H."/>
            <person name="Pryor M."/>
            <person name="Duthoy S."/>
            <person name="Grondin S."/>
            <person name="Lacroix C."/>
            <person name="Monsempe C."/>
            <person name="Simon S."/>
            <person name="Harris B."/>
            <person name="Atkin R."/>
            <person name="Doggett J."/>
            <person name="Mayes R."/>
            <person name="Keating L."/>
            <person name="Wheeler P.R."/>
            <person name="Parkhill J."/>
            <person name="Barrell B.G."/>
            <person name="Cole S.T."/>
            <person name="Gordon S.V."/>
            <person name="Hewinson R.G."/>
        </authorList>
    </citation>
    <scope>NUCLEOTIDE SEQUENCE [LARGE SCALE GENOMIC DNA]</scope>
    <source>
        <strain>ATCC BAA-935 / AF2122/97</strain>
    </source>
</reference>
<reference key="3">
    <citation type="journal article" date="2017" name="Genome Announc.">
        <title>Updated reference genome sequence and annotation of Mycobacterium bovis AF2122/97.</title>
        <authorList>
            <person name="Malone K.M."/>
            <person name="Farrell D."/>
            <person name="Stuber T.P."/>
            <person name="Schubert O.T."/>
            <person name="Aebersold R."/>
            <person name="Robbe-Austerman S."/>
            <person name="Gordon S.V."/>
        </authorList>
    </citation>
    <scope>NUCLEOTIDE SEQUENCE [LARGE SCALE GENOMIC DNA]</scope>
    <scope>GENOME REANNOTATION</scope>
    <source>
        <strain>ATCC BAA-935 / AF2122/97</strain>
    </source>
</reference>
<reference key="4">
    <citation type="journal article" date="2006" name="Biochim. Biophys. Acta">
        <title>Catalase-peroxidase of Mycobacterium bovis BCG converts isoniazid to isonicotinamide, but not to isonicotinic acid: differentiation parameter between enzymes of Mycobacterium bovis BCG and Mycobacterium tuberculosis.</title>
        <authorList>
            <person name="Kang S.-K."/>
            <person name="Lee J.-H."/>
            <person name="Lee Y.-C."/>
            <person name="Kim C.-H."/>
        </authorList>
    </citation>
    <scope>FUNCTION</scope>
    <scope>SUBUNIT</scope>
</reference>
<comment type="function">
    <text evidence="1 2">Bifunctional enzyme with both catalase and broad-spectrum peroxidase activity. May play a role in the intracellular survival of mycobacteria.</text>
</comment>
<comment type="catalytic activity">
    <reaction evidence="1">
        <text>H2O2 + AH2 = A + 2 H2O</text>
        <dbReference type="Rhea" id="RHEA:30275"/>
        <dbReference type="ChEBI" id="CHEBI:13193"/>
        <dbReference type="ChEBI" id="CHEBI:15377"/>
        <dbReference type="ChEBI" id="CHEBI:16240"/>
        <dbReference type="ChEBI" id="CHEBI:17499"/>
        <dbReference type="EC" id="1.11.1.21"/>
    </reaction>
</comment>
<comment type="catalytic activity">
    <reaction evidence="1">
        <text>2 H2O2 = O2 + 2 H2O</text>
        <dbReference type="Rhea" id="RHEA:20309"/>
        <dbReference type="ChEBI" id="CHEBI:15377"/>
        <dbReference type="ChEBI" id="CHEBI:15379"/>
        <dbReference type="ChEBI" id="CHEBI:16240"/>
        <dbReference type="EC" id="1.11.1.21"/>
    </reaction>
</comment>
<comment type="cofactor">
    <cofactor evidence="1">
        <name>heme b</name>
        <dbReference type="ChEBI" id="CHEBI:60344"/>
    </cofactor>
    <text evidence="1">Binds 1 heme b (iron(II)-protoporphyrin IX) group per dimer.</text>
</comment>
<comment type="subunit">
    <text evidence="2">Homodimer.</text>
</comment>
<comment type="PTM">
    <text evidence="1">Formation of the three residue Trp-Tyr-Met cross-link is important for the catalase, but not the peroxidase activity of the enzyme.</text>
</comment>
<comment type="similarity">
    <text evidence="1">Belongs to the peroxidase family. Peroxidase/catalase subfamily.</text>
</comment>
<evidence type="ECO:0000255" key="1">
    <source>
        <dbReference type="HAMAP-Rule" id="MF_01961"/>
    </source>
</evidence>
<evidence type="ECO:0000269" key="2">
    <source>
    </source>
</evidence>
<evidence type="ECO:0000305" key="3"/>
<feature type="chain" id="PRO_0000055571" description="Catalase-peroxidase">
    <location>
        <begin position="1"/>
        <end position="740"/>
    </location>
</feature>
<feature type="active site" description="Proton acceptor" evidence="1">
    <location>
        <position position="108"/>
    </location>
</feature>
<feature type="binding site" description="axial binding residue" evidence="1">
    <location>
        <position position="270"/>
    </location>
    <ligand>
        <name>heme b</name>
        <dbReference type="ChEBI" id="CHEBI:60344"/>
    </ligand>
    <ligandPart>
        <name>Fe</name>
        <dbReference type="ChEBI" id="CHEBI:18248"/>
    </ligandPart>
</feature>
<feature type="site" description="Transition state stabilizer" evidence="1">
    <location>
        <position position="104"/>
    </location>
</feature>
<feature type="cross-link" description="Tryptophyl-tyrosyl-methioninium (Trp-Tyr) (with M-255)" evidence="1">
    <location>
        <begin position="107"/>
        <end position="229"/>
    </location>
</feature>
<feature type="cross-link" description="Tryptophyl-tyrosyl-methioninium (Tyr-Met) (with W-107)" evidence="1">
    <location>
        <begin position="229"/>
        <end position="255"/>
    </location>
</feature>
<feature type="sequence conflict" description="In Ref. 1; CAA58266." evidence="3" ref="1">
    <original>G</original>
    <variation>A</variation>
    <location>
        <position position="234"/>
    </location>
</feature>
<gene>
    <name evidence="1" type="primary">katG</name>
    <name type="ordered locus">BQ2027_MB1943C</name>
</gene>
<keyword id="KW-0349">Heme</keyword>
<keyword id="KW-0376">Hydrogen peroxide</keyword>
<keyword id="KW-0408">Iron</keyword>
<keyword id="KW-0479">Metal-binding</keyword>
<keyword id="KW-0560">Oxidoreductase</keyword>
<keyword id="KW-0575">Peroxidase</keyword>
<keyword id="KW-1185">Reference proteome</keyword>
<accession>P46817</accession>
<accession>A0A1R3XZQ4</accession>
<accession>X2BJE1</accession>
<sequence length="740" mass="80562">MPEQHPPITETTTGAASNGCPVVGHMKYPVEGGGNQDWWPNRLNLKVLHQNPAVADPMGAAFDYAAEVATIDVDALTRDIEEVMTTSQPWWPADYGHYGPLFIRMAWHAAGTYRIHDGRGGAGGGMQRFAPLNSWPDNASLDKARRLLWPVKKKYGKKLSWADLIVFAGNCALESMGFKTFGFGFGRVDQWEPDEVYWGKEATWLGDERYSGKRDLENPLAAVQMGLIYVNPEGPNGNPDPMAAAVDIRETFRRMAMNDVETAALIVGGHTFGKTHGAGPADLVGPEPEAAPLEQMGLGWKSSYGTGTGKDAITSGIEVVWTNTPTKWDNSFLEILYGYEWELTKSPAGAWQYTAKDGAGAGTIPDPFGGPGRSPTMLATDLSLRVDPIYERITRRWLEHPEELADEFAKAWYKLIHRDMGPVARYLGPLVPKQTLLWQDPVPAVSHDLVGEAEIASLKSQILASGLTVSQLVSTAWAAASSFRGSDKRGGANGGRIRLQPQVGWEVNDPDGDLRKVIRTLEEIQESFNSAAPGNIKVSFADLVVLGGCAAIEKAAKAAGHNITVPFTPGRTDASQEQTDVESFAVLEPKADGFRNYLGKGNPLPAEYMLLDKANLLTLSAPEMTVLVGGLRVLGANYKRLPLGVFTEASESLTNDFFVNLLDMGITWEPSPADDGTYQGKDGSGKVKWTGSRVDLVFGSNSELRALVEVYGADDAQPKFVQDFVAAWDKVMNLDRFDVR</sequence>